<organism>
    <name type="scientific">Saccharomyces cerevisiae (strain ATCC 204508 / S288c)</name>
    <name type="common">Baker's yeast</name>
    <dbReference type="NCBI Taxonomy" id="559292"/>
    <lineage>
        <taxon>Eukaryota</taxon>
        <taxon>Fungi</taxon>
        <taxon>Dikarya</taxon>
        <taxon>Ascomycota</taxon>
        <taxon>Saccharomycotina</taxon>
        <taxon>Saccharomycetes</taxon>
        <taxon>Saccharomycetales</taxon>
        <taxon>Saccharomycetaceae</taxon>
        <taxon>Saccharomyces</taxon>
    </lineage>
</organism>
<name>SIN3_YEAST</name>
<dbReference type="EMBL" id="M36822">
    <property type="protein sequence ID" value="AAA34839.1"/>
    <property type="molecule type" value="Genomic_DNA"/>
</dbReference>
<dbReference type="EMBL" id="Z74746">
    <property type="protein sequence ID" value="CAA99003.1"/>
    <property type="molecule type" value="Genomic_DNA"/>
</dbReference>
<dbReference type="EMBL" id="BK006948">
    <property type="protein sequence ID" value="DAA10779.1"/>
    <property type="molecule type" value="Genomic_DNA"/>
</dbReference>
<dbReference type="PIR" id="S66686">
    <property type="entry name" value="RGBYS3"/>
</dbReference>
<dbReference type="RefSeq" id="NP_014639.1">
    <property type="nucleotide sequence ID" value="NM_001183258.1"/>
</dbReference>
<dbReference type="PDB" id="6XAW">
    <property type="method" value="X-ray"/>
    <property type="resolution" value="1.84 A"/>
    <property type="chains" value="A=402-473"/>
</dbReference>
<dbReference type="PDB" id="6XDJ">
    <property type="method" value="X-ray"/>
    <property type="resolution" value="2.20 A"/>
    <property type="chains" value="A/B/C/D=402-473"/>
</dbReference>
<dbReference type="PDB" id="7YI0">
    <property type="method" value="EM"/>
    <property type="resolution" value="3.20 A"/>
    <property type="chains" value="A=1-1536"/>
</dbReference>
<dbReference type="PDB" id="7YI2">
    <property type="method" value="EM"/>
    <property type="resolution" value="3.40 A"/>
    <property type="chains" value="A=1-1536"/>
</dbReference>
<dbReference type="PDB" id="7YI3">
    <property type="method" value="EM"/>
    <property type="resolution" value="3.30 A"/>
    <property type="chains" value="A=1-1536"/>
</dbReference>
<dbReference type="PDB" id="7YI4">
    <property type="method" value="EM"/>
    <property type="resolution" value="3.96 A"/>
    <property type="chains" value="A=1-1536"/>
</dbReference>
<dbReference type="PDB" id="7YI5">
    <property type="method" value="EM"/>
    <property type="resolution" value="3.96 A"/>
    <property type="chains" value="A=1-1536"/>
</dbReference>
<dbReference type="PDB" id="8GA8">
    <property type="method" value="EM"/>
    <property type="resolution" value="3.50 A"/>
    <property type="chains" value="A/D=1-1536"/>
</dbReference>
<dbReference type="PDB" id="8HPO">
    <property type="method" value="EM"/>
    <property type="resolution" value="2.60 A"/>
    <property type="chains" value="A/B=1-1536"/>
</dbReference>
<dbReference type="PDB" id="8HXX">
    <property type="method" value="EM"/>
    <property type="resolution" value="3.00 A"/>
    <property type="chains" value="K=1-1536"/>
</dbReference>
<dbReference type="PDB" id="8HXY">
    <property type="method" value="EM"/>
    <property type="resolution" value="3.10 A"/>
    <property type="chains" value="K=1-1536"/>
</dbReference>
<dbReference type="PDB" id="8HY0">
    <property type="method" value="EM"/>
    <property type="resolution" value="3.10 A"/>
    <property type="chains" value="K=1-1536"/>
</dbReference>
<dbReference type="PDB" id="8IHN">
    <property type="method" value="EM"/>
    <property type="resolution" value="3.37 A"/>
    <property type="chains" value="K=1-1536"/>
</dbReference>
<dbReference type="PDB" id="8IHT">
    <property type="method" value="EM"/>
    <property type="resolution" value="3.72 A"/>
    <property type="chains" value="K=1-1536"/>
</dbReference>
<dbReference type="PDB" id="8JHO">
    <property type="method" value="EM"/>
    <property type="resolution" value="7.60 A"/>
    <property type="chains" value="K=1-1536"/>
</dbReference>
<dbReference type="PDB" id="8KC7">
    <property type="method" value="EM"/>
    <property type="resolution" value="3.46 A"/>
    <property type="chains" value="B=215-1536"/>
</dbReference>
<dbReference type="PDB" id="8KD2">
    <property type="method" value="EM"/>
    <property type="resolution" value="3.02 A"/>
    <property type="chains" value="B=2-1536"/>
</dbReference>
<dbReference type="PDB" id="8KD3">
    <property type="method" value="EM"/>
    <property type="resolution" value="2.90 A"/>
    <property type="chains" value="B=2-1536"/>
</dbReference>
<dbReference type="PDB" id="8KD4">
    <property type="method" value="EM"/>
    <property type="resolution" value="2.93 A"/>
    <property type="chains" value="B=215-1536"/>
</dbReference>
<dbReference type="PDB" id="8KD5">
    <property type="method" value="EM"/>
    <property type="resolution" value="2.90 A"/>
    <property type="chains" value="B=2-1536"/>
</dbReference>
<dbReference type="PDB" id="8KD6">
    <property type="method" value="EM"/>
    <property type="resolution" value="3.07 A"/>
    <property type="chains" value="B=215-1536"/>
</dbReference>
<dbReference type="PDB" id="8KD7">
    <property type="method" value="EM"/>
    <property type="resolution" value="3.09 A"/>
    <property type="chains" value="B=215-1536"/>
</dbReference>
<dbReference type="PDB" id="8TOF">
    <property type="method" value="EM"/>
    <property type="resolution" value="2.80 A"/>
    <property type="chains" value="A=1-1536"/>
</dbReference>
<dbReference type="PDB" id="8W9C">
    <property type="method" value="EM"/>
    <property type="resolution" value="3.30 A"/>
    <property type="chains" value="A=1-1536"/>
</dbReference>
<dbReference type="PDB" id="8W9D">
    <property type="method" value="EM"/>
    <property type="resolution" value="3.90 A"/>
    <property type="chains" value="A=1-1536"/>
</dbReference>
<dbReference type="PDB" id="8W9E">
    <property type="method" value="EM"/>
    <property type="resolution" value="3.60 A"/>
    <property type="chains" value="A=1-1536"/>
</dbReference>
<dbReference type="PDB" id="8W9F">
    <property type="method" value="EM"/>
    <property type="resolution" value="4.40 A"/>
    <property type="chains" value="A=1-1536"/>
</dbReference>
<dbReference type="PDBsum" id="6XAW"/>
<dbReference type="PDBsum" id="6XDJ"/>
<dbReference type="PDBsum" id="7YI0"/>
<dbReference type="PDBsum" id="7YI2"/>
<dbReference type="PDBsum" id="7YI3"/>
<dbReference type="PDBsum" id="7YI4"/>
<dbReference type="PDBsum" id="7YI5"/>
<dbReference type="PDBsum" id="8GA8"/>
<dbReference type="PDBsum" id="8HPO"/>
<dbReference type="PDBsum" id="8HXX"/>
<dbReference type="PDBsum" id="8HXY"/>
<dbReference type="PDBsum" id="8HY0"/>
<dbReference type="PDBsum" id="8IHN"/>
<dbReference type="PDBsum" id="8IHT"/>
<dbReference type="PDBsum" id="8JHO"/>
<dbReference type="PDBsum" id="8KC7"/>
<dbReference type="PDBsum" id="8KD2"/>
<dbReference type="PDBsum" id="8KD3"/>
<dbReference type="PDBsum" id="8KD4"/>
<dbReference type="PDBsum" id="8KD5"/>
<dbReference type="PDBsum" id="8KD6"/>
<dbReference type="PDBsum" id="8KD7"/>
<dbReference type="PDBsum" id="8TOF"/>
<dbReference type="PDBsum" id="8W9C"/>
<dbReference type="PDBsum" id="8W9D"/>
<dbReference type="PDBsum" id="8W9E"/>
<dbReference type="PDBsum" id="8W9F"/>
<dbReference type="EMDB" id="EMD-29892"/>
<dbReference type="EMDB" id="EMD-33845"/>
<dbReference type="EMDB" id="EMD-33849"/>
<dbReference type="EMDB" id="EMD-33850"/>
<dbReference type="EMDB" id="EMD-33851"/>
<dbReference type="EMDB" id="EMD-33852"/>
<dbReference type="EMDB" id="EMD-34935"/>
<dbReference type="EMDB" id="EMD-35081"/>
<dbReference type="EMDB" id="EMD-35082"/>
<dbReference type="EMDB" id="EMD-35084"/>
<dbReference type="EMDB" id="EMD-35450"/>
<dbReference type="EMDB" id="EMD-35455"/>
<dbReference type="EMDB" id="EMD-36283"/>
<dbReference type="EMDB" id="EMD-37096"/>
<dbReference type="EMDB" id="EMD-37122"/>
<dbReference type="EMDB" id="EMD-37123"/>
<dbReference type="EMDB" id="EMD-37124"/>
<dbReference type="EMDB" id="EMD-37125"/>
<dbReference type="EMDB" id="EMD-37126"/>
<dbReference type="EMDB" id="EMD-37127"/>
<dbReference type="EMDB" id="EMD-37364"/>
<dbReference type="EMDB" id="EMD-37365"/>
<dbReference type="EMDB" id="EMD-37366"/>
<dbReference type="EMDB" id="EMD-37367"/>
<dbReference type="EMDB" id="EMD-41449"/>
<dbReference type="SMR" id="P22579"/>
<dbReference type="BioGRID" id="34400">
    <property type="interactions" value="1189"/>
</dbReference>
<dbReference type="ComplexPortal" id="CPX-1851">
    <property type="entry name" value="RPD3S histone deacetylase complex"/>
</dbReference>
<dbReference type="ComplexPortal" id="CPX-1852">
    <property type="entry name" value="RPD3L histone deacetylase complex"/>
</dbReference>
<dbReference type="DIP" id="DIP-597N"/>
<dbReference type="FunCoup" id="P22579">
    <property type="interactions" value="1346"/>
</dbReference>
<dbReference type="IntAct" id="P22579">
    <property type="interactions" value="88"/>
</dbReference>
<dbReference type="MINT" id="P22579"/>
<dbReference type="STRING" id="4932.YOL004W"/>
<dbReference type="CarbonylDB" id="P22579"/>
<dbReference type="GlyGen" id="P22579">
    <property type="glycosylation" value="3 sites, 1 O-linked glycan (2 sites)"/>
</dbReference>
<dbReference type="iPTMnet" id="P22579"/>
<dbReference type="PaxDb" id="4932-YOL004W"/>
<dbReference type="PeptideAtlas" id="P22579"/>
<dbReference type="TopDownProteomics" id="P22579"/>
<dbReference type="EnsemblFungi" id="YOL004W_mRNA">
    <property type="protein sequence ID" value="YOL004W"/>
    <property type="gene ID" value="YOL004W"/>
</dbReference>
<dbReference type="GeneID" id="854158"/>
<dbReference type="KEGG" id="sce:YOL004W"/>
<dbReference type="AGR" id="SGD:S000005364"/>
<dbReference type="SGD" id="S000005364">
    <property type="gene designation" value="SIN3"/>
</dbReference>
<dbReference type="VEuPathDB" id="FungiDB:YOL004W"/>
<dbReference type="eggNOG" id="KOG4204">
    <property type="taxonomic scope" value="Eukaryota"/>
</dbReference>
<dbReference type="GeneTree" id="ENSGT00940000171042"/>
<dbReference type="HOGENOM" id="CLU_001360_2_1_1"/>
<dbReference type="InParanoid" id="P22579"/>
<dbReference type="OMA" id="MCEEVIK"/>
<dbReference type="OrthoDB" id="10265969at2759"/>
<dbReference type="BioCyc" id="YEAST:G3O-33421-MONOMER"/>
<dbReference type="BioGRID-ORCS" id="854158">
    <property type="hits" value="0 hits in 10 CRISPR screens"/>
</dbReference>
<dbReference type="PRO" id="PR:P22579"/>
<dbReference type="Proteomes" id="UP000002311">
    <property type="component" value="Chromosome XV"/>
</dbReference>
<dbReference type="RNAct" id="P22579">
    <property type="molecule type" value="protein"/>
</dbReference>
<dbReference type="GO" id="GO:0000785">
    <property type="term" value="C:chromatin"/>
    <property type="evidence" value="ECO:0000318"/>
    <property type="project" value="GO_Central"/>
</dbReference>
<dbReference type="GO" id="GO:0005634">
    <property type="term" value="C:nucleus"/>
    <property type="evidence" value="ECO:0000303"/>
    <property type="project" value="ComplexPortal"/>
</dbReference>
<dbReference type="GO" id="GO:0033698">
    <property type="term" value="C:Rpd3L complex"/>
    <property type="evidence" value="ECO:0000314"/>
    <property type="project" value="SGD"/>
</dbReference>
<dbReference type="GO" id="GO:0070210">
    <property type="term" value="C:Rpd3L-Expanded complex"/>
    <property type="evidence" value="ECO:0007005"/>
    <property type="project" value="SGD"/>
</dbReference>
<dbReference type="GO" id="GO:0032221">
    <property type="term" value="C:Rpd3S complex"/>
    <property type="evidence" value="ECO:0000314"/>
    <property type="project" value="SGD"/>
</dbReference>
<dbReference type="GO" id="GO:0070822">
    <property type="term" value="C:Sin3-type complex"/>
    <property type="evidence" value="ECO:0000314"/>
    <property type="project" value="SGD"/>
</dbReference>
<dbReference type="GO" id="GO:0042802">
    <property type="term" value="F:identical protein binding"/>
    <property type="evidence" value="ECO:0000353"/>
    <property type="project" value="IntAct"/>
</dbReference>
<dbReference type="GO" id="GO:0003713">
    <property type="term" value="F:transcription coactivator activity"/>
    <property type="evidence" value="ECO:0000315"/>
    <property type="project" value="SGD"/>
</dbReference>
<dbReference type="GO" id="GO:0003714">
    <property type="term" value="F:transcription corepressor activity"/>
    <property type="evidence" value="ECO:0000315"/>
    <property type="project" value="SGD"/>
</dbReference>
<dbReference type="GO" id="GO:0051301">
    <property type="term" value="P:cell division"/>
    <property type="evidence" value="ECO:0007669"/>
    <property type="project" value="UniProtKB-KW"/>
</dbReference>
<dbReference type="GO" id="GO:0034605">
    <property type="term" value="P:cellular response to heat"/>
    <property type="evidence" value="ECO:0000315"/>
    <property type="project" value="SGD"/>
</dbReference>
<dbReference type="GO" id="GO:0006303">
    <property type="term" value="P:double-strand break repair via nonhomologous end joining"/>
    <property type="evidence" value="ECO:0000315"/>
    <property type="project" value="SGD"/>
</dbReference>
<dbReference type="GO" id="GO:0000086">
    <property type="term" value="P:G2/M transition of mitotic cell cycle"/>
    <property type="evidence" value="ECO:0000316"/>
    <property type="project" value="SGD"/>
</dbReference>
<dbReference type="GO" id="GO:0051321">
    <property type="term" value="P:meiotic cell cycle"/>
    <property type="evidence" value="ECO:0000315"/>
    <property type="project" value="SGD"/>
</dbReference>
<dbReference type="GO" id="GO:0061188">
    <property type="term" value="P:negative regulation of rDNA heterochromatin formation"/>
    <property type="evidence" value="ECO:0000315"/>
    <property type="project" value="SGD"/>
</dbReference>
<dbReference type="GO" id="GO:0061186">
    <property type="term" value="P:negative regulation of silent mating-type cassette heterochromatin formation"/>
    <property type="evidence" value="ECO:0000315"/>
    <property type="project" value="SGD"/>
</dbReference>
<dbReference type="GO" id="GO:0016479">
    <property type="term" value="P:negative regulation of transcription by RNA polymerase I"/>
    <property type="evidence" value="ECO:0000315"/>
    <property type="project" value="SGD"/>
</dbReference>
<dbReference type="GO" id="GO:0000122">
    <property type="term" value="P:negative regulation of transcription by RNA polymerase II"/>
    <property type="evidence" value="ECO:0000315"/>
    <property type="project" value="SGD"/>
</dbReference>
<dbReference type="GO" id="GO:0044804">
    <property type="term" value="P:nucleophagy"/>
    <property type="evidence" value="ECO:0000315"/>
    <property type="project" value="SGD"/>
</dbReference>
<dbReference type="GO" id="GO:0006334">
    <property type="term" value="P:nucleosome assembly"/>
    <property type="evidence" value="ECO:0000303"/>
    <property type="project" value="ComplexPortal"/>
</dbReference>
<dbReference type="GO" id="GO:0045944">
    <property type="term" value="P:positive regulation of transcription by RNA polymerase II"/>
    <property type="evidence" value="ECO:0000315"/>
    <property type="project" value="SGD"/>
</dbReference>
<dbReference type="GO" id="GO:0070550">
    <property type="term" value="P:rDNA chromatin condensation"/>
    <property type="evidence" value="ECO:0000315"/>
    <property type="project" value="SGD"/>
</dbReference>
<dbReference type="GO" id="GO:0030174">
    <property type="term" value="P:regulation of DNA-templated DNA replication initiation"/>
    <property type="evidence" value="ECO:0000315"/>
    <property type="project" value="SGD"/>
</dbReference>
<dbReference type="GO" id="GO:0006357">
    <property type="term" value="P:regulation of transcription by RNA polymerase II"/>
    <property type="evidence" value="ECO:0000316"/>
    <property type="project" value="SGD"/>
</dbReference>
<dbReference type="FunFam" id="1.20.1160.11:FF:000002">
    <property type="entry name" value="Paired amphipathic helix protein SIN3"/>
    <property type="match status" value="1"/>
</dbReference>
<dbReference type="FunFam" id="1.20.1160.11:FF:000001">
    <property type="entry name" value="Paired amphipathic helix protein Sin3"/>
    <property type="match status" value="1"/>
</dbReference>
<dbReference type="FunFam" id="1.20.1160.11:FF:000003">
    <property type="entry name" value="Paired amphipathic helix SIN3-like protein"/>
    <property type="match status" value="1"/>
</dbReference>
<dbReference type="Gene3D" id="1.20.1160.11">
    <property type="entry name" value="Paired amphipathic helix"/>
    <property type="match status" value="3"/>
</dbReference>
<dbReference type="InterPro" id="IPR013194">
    <property type="entry name" value="HDAC_interact_dom"/>
</dbReference>
<dbReference type="InterPro" id="IPR003822">
    <property type="entry name" value="PAH"/>
</dbReference>
<dbReference type="InterPro" id="IPR036600">
    <property type="entry name" value="PAH_sf"/>
</dbReference>
<dbReference type="InterPro" id="IPR039774">
    <property type="entry name" value="Sin3-like"/>
</dbReference>
<dbReference type="InterPro" id="IPR031693">
    <property type="entry name" value="Sin3_C"/>
</dbReference>
<dbReference type="PANTHER" id="PTHR12346:SF0">
    <property type="entry name" value="SIN3A, ISOFORM G"/>
    <property type="match status" value="1"/>
</dbReference>
<dbReference type="PANTHER" id="PTHR12346">
    <property type="entry name" value="SIN3B-RELATED"/>
    <property type="match status" value="1"/>
</dbReference>
<dbReference type="Pfam" id="PF02671">
    <property type="entry name" value="PAH"/>
    <property type="match status" value="3"/>
</dbReference>
<dbReference type="Pfam" id="PF08295">
    <property type="entry name" value="Sin3_corepress"/>
    <property type="match status" value="1"/>
</dbReference>
<dbReference type="Pfam" id="PF16879">
    <property type="entry name" value="Sin3a_C"/>
    <property type="match status" value="1"/>
</dbReference>
<dbReference type="SMART" id="SM00761">
    <property type="entry name" value="HDAC_interact"/>
    <property type="match status" value="1"/>
</dbReference>
<dbReference type="SUPFAM" id="SSF47762">
    <property type="entry name" value="PAH2 domain"/>
    <property type="match status" value="3"/>
</dbReference>
<dbReference type="PROSITE" id="PS51477">
    <property type="entry name" value="PAH"/>
    <property type="match status" value="3"/>
</dbReference>
<protein>
    <recommendedName>
        <fullName>Transcriptional regulatory protein SIN3</fullName>
    </recommendedName>
</protein>
<gene>
    <name type="primary">SIN3</name>
    <name type="synonym">CPE1</name>
    <name type="synonym">GAM2</name>
    <name type="synonym">RPD1</name>
    <name type="synonym">SDI1</name>
    <name type="synonym">SDS16</name>
    <name type="synonym">UME4</name>
    <name type="ordered locus">YOL004W</name>
</gene>
<sequence length="1536" mass="174839">MSQVWHNSNSQSNDVATSNDATGSNERNEKEPSLQGNKPGFVQQQQRITLPSLSALSTKEEDRRDSNGQQALTSHAAHILGYPPPHSNAMPSIATDSALKQPHEYHPRPKSSSSSPSINASLMNAGPAPLPTVGAASFSLSRFDNPLPIKAPVHTEEPKSYNGLQEEEKATQRPQDCKEVPAGVQPADAPDPSSNHADANDDNNNNENSHDEDADYRPLNVKDALSYLEQVKFQFSSRPDIYNLFLDIMKDFKSQAIDTPGVIERVSTLFRGYPILIQGFNTFLPQGYRIECSSNPDDPIRVTTPMGTTTVNNNISPSGRGTTDAQELGSFPESDGNGVQQPSNVPMVPSSVYQSEQNQDQQQSLPLLATSSGLPSIQQPEMPAHRQIPQSQSLVPQEDAKKNVDVEFSQAISYVNKIKTRFADQPDIYKHFLEILQTYQREQKPINEVYAQVTHLFQNAPDLLEDFKKFLPDSSASANQQVQHAQQHAQQQHEAQMHAQAQAQAQAQAQVEQQKQQQQFLYPASGYYGHPSNRGIPQQNLPPIGSFSPPTNGSTVHEAYQDQQHMQPPHFMPLPSIVQHGPNMVHQGIANENPPLSDLRTSLTEQYAPSSIQHQQQHPQSISPIANTQYGDIPVRPEIDLDPSIVPVVPEPTEPIENNISLNEEVTFFEKAKRYIGNKHLYTEFLKILNLYSQDILDLDDLVEKVDFYLGSNKELFTWFKNFVGYQEKTKCIENIVHEKHRLDLDLCEAFGPSYKRLPKSDTFMPCSGRDDMCWEVLNDEWVGHPVWASEDSGFIAHRKNQYEETLFKIEEERHEYDFYIESNLRTIQCLETIVNKIENMTENEKANFKLPPGLGHTSMTIYKKVIRKVYDKERGFEIIDALHEHPAVTAPVVLKRLKQKDEEWRRAQREWNKVWRELEQKVFFKSLDHLGLTFKQADKKLLTTKQLISEISSIKVDQTNKKIHWLTPKPKSQLDFDFPDKNIFYDILCLADTFITHTTAYSNPDKERLKDLLKYFISLFFSISFEKIEESLYSHKQNVSESSGSDDGSSIASRKRPYQQEMSLLDILHRSRYQKLKRSNDEDGKVPQLSEPPEEEPNTIEEEELIDEEAKNPWLTGNLVEEANSQGIIQNRSIFNLFANTNIYIFFRHWTTIYERLLEIKQMNERVTKEINTRSTVTFAKDLDLLSSQLSEMGLDFVGEDAYKQVLRLSRRLINGDLEHQWFEESLRQAYNNKAFKLYTIDKVTQSLVKHAHTLMTDAKTAEIMALFVKDRNASTTSAKDQIIYRLQVRSHMSNTENMFRIEFDKRTLHVSIQYIALDDLTLKEPKADEDKWKYYVTSYALPHPTEGIPHEKLKIPFLERLIEFGQDIDGTEVDEEFSPEGISVSTLKIKIQPITYQLHIENGSYDVFTRKATNKYPTIANDNTQKGMVSQKKELISKFLDCAVGLRNNLDEAQKLSMQKKWENLKDSIAKTSAGNQGIESETEKGKITKQEQSDNLDSSTASVLPASITTVPQDDNIETTGNTESSDKGAKIQ</sequence>
<reference key="1">
    <citation type="journal article" date="1990" name="Mol. Cell. Biol.">
        <title>The Saccharomyces cerevisiae SIN3 gene, a negative regulator of HO, contains four paired amphipathic helix motifs.</title>
        <authorList>
            <person name="Wang H."/>
            <person name="Clark I."/>
            <person name="Nicholson P.R."/>
            <person name="Herskowitz I."/>
            <person name="Stillman D.J."/>
        </authorList>
    </citation>
    <scope>NUCLEOTIDE SEQUENCE [GENOMIC DNA]</scope>
    <scope>FUNCTION</scope>
    <source>
        <strain>S288c / GRF88</strain>
    </source>
</reference>
<reference key="2">
    <citation type="journal article" date="1997" name="Nature">
        <title>The nucleotide sequence of Saccharomyces cerevisiae chromosome XV.</title>
        <authorList>
            <person name="Dujon B."/>
            <person name="Albermann K."/>
            <person name="Aldea M."/>
            <person name="Alexandraki D."/>
            <person name="Ansorge W."/>
            <person name="Arino J."/>
            <person name="Benes V."/>
            <person name="Bohn C."/>
            <person name="Bolotin-Fukuhara M."/>
            <person name="Bordonne R."/>
            <person name="Boyer J."/>
            <person name="Camasses A."/>
            <person name="Casamayor A."/>
            <person name="Casas C."/>
            <person name="Cheret G."/>
            <person name="Cziepluch C."/>
            <person name="Daignan-Fornier B."/>
            <person name="Dang V.-D."/>
            <person name="de Haan M."/>
            <person name="Delius H."/>
            <person name="Durand P."/>
            <person name="Fairhead C."/>
            <person name="Feldmann H."/>
            <person name="Gaillon L."/>
            <person name="Galisson F."/>
            <person name="Gamo F.-J."/>
            <person name="Gancedo C."/>
            <person name="Goffeau A."/>
            <person name="Goulding S.E."/>
            <person name="Grivell L.A."/>
            <person name="Habbig B."/>
            <person name="Hand N.J."/>
            <person name="Hani J."/>
            <person name="Hattenhorst U."/>
            <person name="Hebling U."/>
            <person name="Hernando Y."/>
            <person name="Herrero E."/>
            <person name="Heumann K."/>
            <person name="Hiesel R."/>
            <person name="Hilger F."/>
            <person name="Hofmann B."/>
            <person name="Hollenberg C.P."/>
            <person name="Hughes B."/>
            <person name="Jauniaux J.-C."/>
            <person name="Kalogeropoulos A."/>
            <person name="Katsoulou C."/>
            <person name="Kordes E."/>
            <person name="Lafuente M.J."/>
            <person name="Landt O."/>
            <person name="Louis E.J."/>
            <person name="Maarse A.C."/>
            <person name="Madania A."/>
            <person name="Mannhaupt G."/>
            <person name="Marck C."/>
            <person name="Martin R.P."/>
            <person name="Mewes H.-W."/>
            <person name="Michaux G."/>
            <person name="Paces V."/>
            <person name="Parle-McDermott A.G."/>
            <person name="Pearson B.M."/>
            <person name="Perrin A."/>
            <person name="Pettersson B."/>
            <person name="Poch O."/>
            <person name="Pohl T.M."/>
            <person name="Poirey R."/>
            <person name="Portetelle D."/>
            <person name="Pujol A."/>
            <person name="Purnelle B."/>
            <person name="Ramezani Rad M."/>
            <person name="Rechmann S."/>
            <person name="Schwager C."/>
            <person name="Schweizer M."/>
            <person name="Sor F."/>
            <person name="Sterky F."/>
            <person name="Tarassov I.A."/>
            <person name="Teodoru C."/>
            <person name="Tettelin H."/>
            <person name="Thierry A."/>
            <person name="Tobiasch E."/>
            <person name="Tzermia M."/>
            <person name="Uhlen M."/>
            <person name="Unseld M."/>
            <person name="Valens M."/>
            <person name="Vandenbol M."/>
            <person name="Vetter I."/>
            <person name="Vlcek C."/>
            <person name="Voet M."/>
            <person name="Volckaert G."/>
            <person name="Voss H."/>
            <person name="Wambutt R."/>
            <person name="Wedler H."/>
            <person name="Wiemann S."/>
            <person name="Winsor B."/>
            <person name="Wolfe K.H."/>
            <person name="Zollner A."/>
            <person name="Zumstein E."/>
            <person name="Kleine K."/>
        </authorList>
    </citation>
    <scope>NUCLEOTIDE SEQUENCE [LARGE SCALE GENOMIC DNA]</scope>
    <source>
        <strain>ATCC 204508 / S288c</strain>
    </source>
</reference>
<reference key="3">
    <citation type="journal article" date="2014" name="G3 (Bethesda)">
        <title>The reference genome sequence of Saccharomyces cerevisiae: Then and now.</title>
        <authorList>
            <person name="Engel S.R."/>
            <person name="Dietrich F.S."/>
            <person name="Fisk D.G."/>
            <person name="Binkley G."/>
            <person name="Balakrishnan R."/>
            <person name="Costanzo M.C."/>
            <person name="Dwight S.S."/>
            <person name="Hitz B.C."/>
            <person name="Karra K."/>
            <person name="Nash R.S."/>
            <person name="Weng S."/>
            <person name="Wong E.D."/>
            <person name="Lloyd P."/>
            <person name="Skrzypek M.S."/>
            <person name="Miyasato S.R."/>
            <person name="Simison M."/>
            <person name="Cherry J.M."/>
        </authorList>
    </citation>
    <scope>GENOME REANNOTATION</scope>
    <source>
        <strain>ATCC 204508 / S288c</strain>
    </source>
</reference>
<reference key="4">
    <citation type="journal article" date="1991" name="Mol. Cell. Biol.">
        <title>RPD1 (SIN3/UME4) is required for maximal activation and repression of diverse yeast genes.</title>
        <authorList>
            <person name="Vidal M."/>
            <person name="Strich R."/>
            <person name="Easton Esposito R."/>
            <person name="Gaber R.F."/>
        </authorList>
    </citation>
    <scope>FUNCTION</scope>
</reference>
<reference key="5">
    <citation type="journal article" date="1992" name="Mol. Gen. Genet.">
        <title>The Saccharomyces cerevisiae GAM2/SIN3 protein plays a role in both activation and repression of transcription.</title>
        <authorList>
            <person name="Yoshimoto H."/>
            <person name="Ohmae M."/>
            <person name="Yamashita I."/>
        </authorList>
    </citation>
    <scope>FUNCTION</scope>
</reference>
<reference key="6">
    <citation type="journal article" date="1993" name="Mol. Cell. Biol.">
        <title>Transcriptional repression in Saccharomyces cerevisiae by a SIN3-LexA fusion protein.</title>
        <authorList>
            <person name="Wang H."/>
            <person name="Stillman D.J."/>
        </authorList>
    </citation>
    <scope>FUNCTION</scope>
</reference>
<reference key="7">
    <citation type="journal article" date="1996" name="Genetics">
        <title>Evidence that the transcriptional regulators SIN3 and RPD3, and a novel gene (SDS3) with similar functions, are involved in transcriptional silencing in S. cerevisiae.</title>
        <authorList>
            <person name="Vannier D."/>
            <person name="Balderes D."/>
            <person name="Shore D."/>
        </authorList>
    </citation>
    <scope>FUNCTION</scope>
</reference>
<reference key="8">
    <citation type="journal article" date="1997" name="Mol. Cell. Biol.">
        <title>A large protein complex containing the yeast Sin3p and Rpd3p transcriptional regulators.</title>
        <authorList>
            <person name="Kasten M.M."/>
            <person name="Dorland S."/>
            <person name="Stillman D.J."/>
        </authorList>
    </citation>
    <scope>FUNCTION</scope>
    <scope>IDENTIFICATION IN THE RPD3 COMPLEX</scope>
</reference>
<reference key="9">
    <citation type="journal article" date="1997" name="Mol. Gen. Genet.">
        <title>Identification of the Saccharomyces cerevisiae genes STB1-STB5 encoding Sin3p binding proteins.</title>
        <authorList>
            <person name="Kasten M.M."/>
            <person name="Stillman D.J."/>
        </authorList>
    </citation>
    <scope>INTERACTION WITH STB1</scope>
</reference>
<reference key="10">
    <citation type="journal article" date="1998" name="Mol. Cell. Biol.">
        <title>Targeted recruitment of the Sin3-Rpd3 histone deacetylase complex generates a highly localized domain of repressed chromatin in vivo.</title>
        <authorList>
            <person name="Kadosh D."/>
            <person name="Struhl K."/>
        </authorList>
    </citation>
    <scope>FUNCTION OF THE RPD3 COMPLEX</scope>
</reference>
<reference key="11">
    <citation type="journal article" date="1998" name="Nature">
        <title>Transcriptional repression by UME6 involves deacetylation of lysine 5 of histone H4 by RPD3.</title>
        <authorList>
            <person name="Rundlett S.E."/>
            <person name="Carmen A.A."/>
            <person name="Suka N."/>
            <person name="Turner B.M."/>
            <person name="Grunstein M."/>
        </authorList>
    </citation>
    <scope>FUNCTION</scope>
</reference>
<reference key="12">
    <citation type="journal article" date="1999" name="Genetics">
        <title>A general requirement for the Sin3-Rpd3 histone deacetylase complex in regulating silencing in Saccharomyces cerevisiae.</title>
        <authorList>
            <person name="Sun Z.-W."/>
            <person name="Hampsey M."/>
        </authorList>
    </citation>
    <scope>FUNCTION OF THE RPD3 COMPLEX</scope>
</reference>
<reference key="13">
    <citation type="journal article" date="2000" name="EMBO J.">
        <title>Cyclophilin A and Ess1 interact with and regulate silencing by the Sin3-Rpd3 histone deacetylase.</title>
        <authorList>
            <person name="Arevalo-Rodriguez M."/>
            <person name="Cardenas M.E."/>
            <person name="Wu X."/>
            <person name="Hanes S.D."/>
            <person name="Heitman J."/>
        </authorList>
    </citation>
    <scope>INTERACTION WITH ESS1</scope>
</reference>
<reference key="14">
    <citation type="journal article" date="2000" name="Nucleic Acids Res.">
        <title>Combinatorial regulation of phospholipid biosynthetic gene expression by the UME6, SIN3 and RPD3 genes.</title>
        <authorList>
            <person name="Elkhaimi M."/>
            <person name="Kaadige M.R."/>
            <person name="Kamath D."/>
            <person name="Jackson J.C."/>
            <person name="Biliran H. Jr."/>
            <person name="Lopes J.M."/>
        </authorList>
    </citation>
    <scope>FUNCTION</scope>
</reference>
<reference key="15">
    <citation type="journal article" date="2001" name="Mol. Cell. Biol.">
        <title>Identification of the Sin3-binding site in Ume6 defines a two-step process for conversion of Ume6 from a transcriptional repressor to an activator in yeast.</title>
        <authorList>
            <person name="Washburn B.K."/>
            <person name="Easton Esposito R."/>
        </authorList>
    </citation>
    <scope>FUNCTION</scope>
    <scope>INTERACTION WITH UME6</scope>
</reference>
<reference key="16">
    <citation type="journal article" date="2003" name="J. Biol. Chem.">
        <title>Opposite role of yeast ING family members in p53-dependent transcriptional activation.</title>
        <authorList>
            <person name="Nourani A."/>
            <person name="Howe L."/>
            <person name="Pray-Grant M.G."/>
            <person name="Workman J.L."/>
            <person name="Grant P.A."/>
            <person name="Cote J."/>
        </authorList>
    </citation>
    <scope>IDENTIFICATION IN THE RPD3 COMPLEX</scope>
    <scope>IDENTIFICATION BY MASS SPECTROMETRY</scope>
</reference>
<reference key="17">
    <citation type="journal article" date="2003" name="Mol. Cell. Biol.">
        <title>Loss of Sin3/Rpd3 histone deacetylase restores the DNA damage response in checkpoint-deficient strains of Saccharomyces cerevisiae.</title>
        <authorList>
            <person name="Scott K.L."/>
            <person name="Plon S.E."/>
        </authorList>
    </citation>
    <scope>FUNCTION OF THE RPD3 COMPLEX</scope>
</reference>
<reference key="18">
    <citation type="journal article" date="2003" name="Nature">
        <title>Global analysis of protein expression in yeast.</title>
        <authorList>
            <person name="Ghaemmaghami S."/>
            <person name="Huh W.-K."/>
            <person name="Bower K."/>
            <person name="Howson R.W."/>
            <person name="Belle A."/>
            <person name="Dephoure N."/>
            <person name="O'Shea E.K."/>
            <person name="Weissman J.S."/>
        </authorList>
    </citation>
    <scope>LEVEL OF PROTEIN EXPRESSION [LARGE SCALE ANALYSIS]</scope>
</reference>
<reference key="19">
    <citation type="journal article" date="2004" name="EMBO J.">
        <title>The unfolded protein response represses differentiation through the RPD3-SIN3 histone deacetylase.</title>
        <authorList>
            <person name="Schroeder M."/>
            <person name="Clark R."/>
            <person name="Liu C.Y."/>
            <person name="Kaufman R.J."/>
        </authorList>
    </citation>
    <scope>FUNCTION OF THE RPD3 COMPLEX</scope>
</reference>
<reference key="20">
    <citation type="journal article" date="2004" name="Mol. Cell. Biol.">
        <title>The Rpd3-Sin3 histone deacetylase regulates replication timing and enables intra-S origin control in Saccharomyces cerevisiae.</title>
        <authorList>
            <person name="Aparicio J.G."/>
            <person name="Viggiani C.J."/>
            <person name="Gibson D.G."/>
            <person name="Aparicio O.M."/>
        </authorList>
    </citation>
    <scope>FUNCTION</scope>
</reference>
<reference key="21">
    <citation type="journal article" date="2004" name="Nature">
        <title>The MAPK Hog1 recruits Rpd3 histone deacetylase to activate osmoresponsive genes.</title>
        <authorList>
            <person name="De Nadal E."/>
            <person name="Zapater M."/>
            <person name="Alepuz P.M."/>
            <person name="Sumoy L."/>
            <person name="Mas G."/>
            <person name="Posas F."/>
        </authorList>
    </citation>
    <scope>FUNCTION OF THE RPD3 COMPLEX</scope>
</reference>
<reference key="22">
    <citation type="journal article" date="2004" name="Proc. Natl. Acad. Sci. U.S.A.">
        <title>Saccharomyces cerevisiae Sin3p facilitates DNA double-strand break repair.</title>
        <authorList>
            <person name="Jazayeri A."/>
            <person name="McAinsh A.D."/>
            <person name="Jackson S.P."/>
        </authorList>
    </citation>
    <scope>FUNCTION OF THE RPD3 COMPLEX</scope>
</reference>
<reference key="23">
    <citation type="journal article" date="2005" name="Biochim. Biophys. Acta">
        <title>Stable incorporation of sequence specific repressors Ash1 and Ume6 into the Rpd3L complex.</title>
        <authorList>
            <person name="Carrozza M.J."/>
            <person name="Florens L."/>
            <person name="Swanson S.K."/>
            <person name="Shia W.-J."/>
            <person name="Anderson S."/>
            <person name="Yates J."/>
            <person name="Washburn M.P."/>
            <person name="Workman J.L."/>
        </authorList>
    </citation>
    <scope>IDENTIFICATION IN THE RPD3C(L) COMPLEX</scope>
    <scope>IDENTIFICATION BY MASS SPECTROMETRY</scope>
</reference>
<reference key="24">
    <citation type="journal article" date="2005" name="Cell">
        <title>Cotranscriptional set2 methylation of histone H3 lysine 36 recruits a repressive Rpd3 complex.</title>
        <authorList>
            <person name="Keogh M.-C."/>
            <person name="Kurdistani S.K."/>
            <person name="Morris S.A."/>
            <person name="Ahn S.H."/>
            <person name="Podolny V."/>
            <person name="Collins S.R."/>
            <person name="Schuldiner M."/>
            <person name="Chin K."/>
            <person name="Punna T."/>
            <person name="Thompson N.J."/>
            <person name="Boone C."/>
            <person name="Emili A."/>
            <person name="Weissman J.S."/>
            <person name="Hughes T.R."/>
            <person name="Strahl B.D."/>
            <person name="Grunstein M."/>
            <person name="Greenblatt J.F."/>
            <person name="Buratowski S."/>
            <person name="Krogan N.J."/>
        </authorList>
    </citation>
    <scope>IDENTIFICATION IN THE RPD3C(L) AND RPD3C(S) COMPLEXES</scope>
    <scope>IDENTIFICATION BY MASS SPECTROMETRY</scope>
    <scope>FUNCTION OF THE RPD3C(S) COMPLEX</scope>
</reference>
<reference key="25">
    <citation type="journal article" date="2005" name="Mech. Ageing Dev.">
        <title>Genes determining yeast replicative life span in a long-lived genetic background.</title>
        <authorList>
            <person name="Kaeberlein M."/>
            <person name="Kirkland K.T."/>
            <person name="Fields S."/>
            <person name="Kennedy B.K."/>
        </authorList>
    </citation>
    <scope>FUNCTION</scope>
</reference>
<reference key="26">
    <citation type="journal article" date="2007" name="J. Proteome Res.">
        <title>Large-scale phosphorylation analysis of alpha-factor-arrested Saccharomyces cerevisiae.</title>
        <authorList>
            <person name="Li X."/>
            <person name="Gerber S.A."/>
            <person name="Rudner A.D."/>
            <person name="Beausoleil S.A."/>
            <person name="Haas W."/>
            <person name="Villen J."/>
            <person name="Elias J.E."/>
            <person name="Gygi S.P."/>
        </authorList>
    </citation>
    <scope>PHOSPHORYLATION [LARGE SCALE ANALYSIS] AT THR-304</scope>
    <scope>IDENTIFICATION BY MASS SPECTROMETRY [LARGE SCALE ANALYSIS]</scope>
    <source>
        <strain>ADR376</strain>
    </source>
</reference>
<reference key="27">
    <citation type="journal article" date="2008" name="Mol. Cell. Proteomics">
        <title>A multidimensional chromatography technology for in-depth phosphoproteome analysis.</title>
        <authorList>
            <person name="Albuquerque C.P."/>
            <person name="Smolka M.B."/>
            <person name="Payne S.H."/>
            <person name="Bafna V."/>
            <person name="Eng J."/>
            <person name="Zhou H."/>
        </authorList>
    </citation>
    <scope>PHOSPHORYLATION [LARGE SCALE ANALYSIS] AT SER-137</scope>
    <scope>IDENTIFICATION BY MASS SPECTROMETRY [LARGE SCALE ANALYSIS]</scope>
</reference>
<reference key="28">
    <citation type="journal article" date="2009" name="Science">
        <title>Global analysis of Cdk1 substrate phosphorylation sites provides insights into evolution.</title>
        <authorList>
            <person name="Holt L.J."/>
            <person name="Tuch B.B."/>
            <person name="Villen J."/>
            <person name="Johnson A.D."/>
            <person name="Gygi S.P."/>
            <person name="Morgan D.O."/>
        </authorList>
    </citation>
    <scope>PHOSPHORYLATION [LARGE SCALE ANALYSIS] AT THR-303; THR-304; SER-316 AND SER-1046</scope>
    <scope>IDENTIFICATION BY MASS SPECTROMETRY [LARGE SCALE ANALYSIS]</scope>
</reference>
<proteinExistence type="evidence at protein level"/>
<accession>P22579</accession>
<accession>D6W263</accession>
<accession>Q08049</accession>
<keyword id="KW-0002">3D-structure</keyword>
<keyword id="KW-0010">Activator</keyword>
<keyword id="KW-0131">Cell cycle</keyword>
<keyword id="KW-0132">Cell division</keyword>
<keyword id="KW-0156">Chromatin regulator</keyword>
<keyword id="KW-0539">Nucleus</keyword>
<keyword id="KW-0597">Phosphoprotein</keyword>
<keyword id="KW-1185">Reference proteome</keyword>
<keyword id="KW-0677">Repeat</keyword>
<keyword id="KW-0678">Repressor</keyword>
<keyword id="KW-0804">Transcription</keyword>
<keyword id="KW-0805">Transcription regulation</keyword>
<feature type="chain" id="PRO_0000121544" description="Transcriptional regulatory protein SIN3">
    <location>
        <begin position="1"/>
        <end position="1536"/>
    </location>
</feature>
<feature type="domain" description="PAH 1" evidence="1">
    <location>
        <begin position="217"/>
        <end position="287"/>
    </location>
</feature>
<feature type="domain" description="PAH 2" evidence="1">
    <location>
        <begin position="404"/>
        <end position="474"/>
    </location>
</feature>
<feature type="domain" description="PAH 3" evidence="1">
    <location>
        <begin position="656"/>
        <end position="727"/>
    </location>
</feature>
<feature type="region of interest" description="Disordered" evidence="2">
    <location>
        <begin position="1"/>
        <end position="128"/>
    </location>
</feature>
<feature type="region of interest" description="Disordered" evidence="2">
    <location>
        <begin position="149"/>
        <end position="216"/>
    </location>
</feature>
<feature type="region of interest" description="Disordered" evidence="2">
    <location>
        <begin position="308"/>
        <end position="363"/>
    </location>
</feature>
<feature type="region of interest" description="Disordered" evidence="2">
    <location>
        <begin position="475"/>
        <end position="511"/>
    </location>
</feature>
<feature type="region of interest" description="Disordered" evidence="2">
    <location>
        <begin position="524"/>
        <end position="556"/>
    </location>
</feature>
<feature type="region of interest" description="Disordered" evidence="2">
    <location>
        <begin position="1037"/>
        <end position="1057"/>
    </location>
</feature>
<feature type="region of interest" description="Disordered" evidence="2">
    <location>
        <begin position="1079"/>
        <end position="1108"/>
    </location>
</feature>
<feature type="region of interest" description="Disordered" evidence="2">
    <location>
        <begin position="1475"/>
        <end position="1536"/>
    </location>
</feature>
<feature type="compositionally biased region" description="Polar residues" evidence="2">
    <location>
        <begin position="1"/>
        <end position="25"/>
    </location>
</feature>
<feature type="compositionally biased region" description="Polar residues" evidence="2">
    <location>
        <begin position="42"/>
        <end position="57"/>
    </location>
</feature>
<feature type="compositionally biased region" description="Basic and acidic residues" evidence="2">
    <location>
        <begin position="166"/>
        <end position="179"/>
    </location>
</feature>
<feature type="compositionally biased region" description="Low complexity" evidence="2">
    <location>
        <begin position="193"/>
        <end position="207"/>
    </location>
</feature>
<feature type="compositionally biased region" description="Polar residues" evidence="2">
    <location>
        <begin position="308"/>
        <end position="325"/>
    </location>
</feature>
<feature type="compositionally biased region" description="Low complexity" evidence="2">
    <location>
        <begin position="354"/>
        <end position="363"/>
    </location>
</feature>
<feature type="compositionally biased region" description="Low complexity" evidence="2">
    <location>
        <begin position="480"/>
        <end position="511"/>
    </location>
</feature>
<feature type="compositionally biased region" description="Low complexity" evidence="2">
    <location>
        <begin position="1041"/>
        <end position="1051"/>
    </location>
</feature>
<feature type="compositionally biased region" description="Acidic residues" evidence="2">
    <location>
        <begin position="1093"/>
        <end position="1108"/>
    </location>
</feature>
<feature type="compositionally biased region" description="Basic and acidic residues" evidence="2">
    <location>
        <begin position="1484"/>
        <end position="1495"/>
    </location>
</feature>
<feature type="compositionally biased region" description="Polar residues" evidence="2">
    <location>
        <begin position="1496"/>
        <end position="1527"/>
    </location>
</feature>
<feature type="modified residue" description="Phosphoserine" evidence="28">
    <location>
        <position position="137"/>
    </location>
</feature>
<feature type="modified residue" description="Phosphothreonine" evidence="29">
    <location>
        <position position="303"/>
    </location>
</feature>
<feature type="modified residue" description="Phosphothreonine" evidence="27 29">
    <location>
        <position position="304"/>
    </location>
</feature>
<feature type="modified residue" description="Phosphoserine" evidence="29">
    <location>
        <position position="316"/>
    </location>
</feature>
<feature type="modified residue" description="Phosphoserine" evidence="29">
    <location>
        <position position="1046"/>
    </location>
</feature>
<feature type="sequence conflict" description="In Ref. 1." evidence="26" ref="1">
    <original>Q</original>
    <variation>QAQ</variation>
    <location>
        <position position="510"/>
    </location>
</feature>
<feature type="helix" evidence="30">
    <location>
        <begin position="406"/>
        <end position="421"/>
    </location>
</feature>
<feature type="turn" evidence="30">
    <location>
        <begin position="422"/>
        <end position="424"/>
    </location>
</feature>
<feature type="helix" evidence="30">
    <location>
        <begin position="426"/>
        <end position="441"/>
    </location>
</feature>
<feature type="helix" evidence="30">
    <location>
        <begin position="446"/>
        <end position="456"/>
    </location>
</feature>
<feature type="turn" evidence="30">
    <location>
        <begin position="457"/>
        <end position="459"/>
    </location>
</feature>
<feature type="helix" evidence="30">
    <location>
        <begin position="461"/>
        <end position="468"/>
    </location>
</feature>
<feature type="helix" evidence="33">
    <location>
        <begin position="657"/>
        <end position="659"/>
    </location>
</feature>
<feature type="helix" evidence="33">
    <location>
        <begin position="663"/>
        <end position="676"/>
    </location>
</feature>
<feature type="helix" evidence="33">
    <location>
        <begin position="679"/>
        <end position="693"/>
    </location>
</feature>
<feature type="helix" evidence="33">
    <location>
        <begin position="699"/>
        <end position="710"/>
    </location>
</feature>
<feature type="helix" evidence="33">
    <location>
        <begin position="714"/>
        <end position="724"/>
    </location>
</feature>
<feature type="strand" evidence="33">
    <location>
        <begin position="733"/>
        <end position="735"/>
    </location>
</feature>
<feature type="turn" evidence="33">
    <location>
        <begin position="752"/>
        <end position="754"/>
    </location>
</feature>
<feature type="strand" evidence="33">
    <location>
        <begin position="755"/>
        <end position="757"/>
    </location>
</feature>
<feature type="helix" evidence="33">
    <location>
        <begin position="761"/>
        <end position="763"/>
    </location>
</feature>
<feature type="helix" evidence="33">
    <location>
        <begin position="773"/>
        <end position="776"/>
    </location>
</feature>
<feature type="strand" evidence="33">
    <location>
        <begin position="781"/>
        <end position="784"/>
    </location>
</feature>
<feature type="helix" evidence="38">
    <location>
        <begin position="788"/>
        <end position="790"/>
    </location>
</feature>
<feature type="helix" evidence="33">
    <location>
        <begin position="803"/>
        <end position="838"/>
    </location>
</feature>
<feature type="helix" evidence="33">
    <location>
        <begin position="844"/>
        <end position="847"/>
    </location>
</feature>
<feature type="turn" evidence="33">
    <location>
        <begin position="853"/>
        <end position="856"/>
    </location>
</feature>
<feature type="helix" evidence="33">
    <location>
        <begin position="862"/>
        <end position="870"/>
    </location>
</feature>
<feature type="turn" evidence="33">
    <location>
        <begin position="873"/>
        <end position="875"/>
    </location>
</feature>
<feature type="helix" evidence="33">
    <location>
        <begin position="876"/>
        <end position="885"/>
    </location>
</feature>
<feature type="helix" evidence="33">
    <location>
        <begin position="887"/>
        <end position="890"/>
    </location>
</feature>
<feature type="turn" evidence="33">
    <location>
        <begin position="891"/>
        <end position="894"/>
    </location>
</feature>
<feature type="helix" evidence="33">
    <location>
        <begin position="895"/>
        <end position="923"/>
    </location>
</feature>
<feature type="helix" evidence="33">
    <location>
        <begin position="925"/>
        <end position="927"/>
    </location>
</feature>
<feature type="helix" evidence="33">
    <location>
        <begin position="932"/>
        <end position="941"/>
    </location>
</feature>
<feature type="strand" evidence="37">
    <location>
        <begin position="942"/>
        <end position="944"/>
    </location>
</feature>
<feature type="helix" evidence="33">
    <location>
        <begin position="945"/>
        <end position="950"/>
    </location>
</feature>
<feature type="strand" evidence="33">
    <location>
        <begin position="953"/>
        <end position="955"/>
    </location>
</feature>
<feature type="helix" evidence="36">
    <location>
        <begin position="957"/>
        <end position="959"/>
    </location>
</feature>
<feature type="strand" evidence="37">
    <location>
        <begin position="964"/>
        <end position="966"/>
    </location>
</feature>
<feature type="strand" evidence="35">
    <location>
        <begin position="967"/>
        <end position="969"/>
    </location>
</feature>
<feature type="strand" evidence="33">
    <location>
        <begin position="973"/>
        <end position="977"/>
    </location>
</feature>
<feature type="helix" evidence="33">
    <location>
        <begin position="983"/>
        <end position="996"/>
    </location>
</feature>
<feature type="strand" evidence="33">
    <location>
        <begin position="1000"/>
        <end position="1002"/>
    </location>
</feature>
<feature type="helix" evidence="33">
    <location>
        <begin position="1004"/>
        <end position="1022"/>
    </location>
</feature>
<feature type="helix" evidence="33">
    <location>
        <begin position="1026"/>
        <end position="1038"/>
    </location>
</feature>
<feature type="turn" evidence="38">
    <location>
        <begin position="1039"/>
        <end position="1042"/>
    </location>
</feature>
<feature type="helix" evidence="33">
    <location>
        <begin position="1065"/>
        <end position="1068"/>
    </location>
</feature>
<feature type="helix" evidence="32">
    <location>
        <begin position="1071"/>
        <end position="1081"/>
    </location>
</feature>
<feature type="strand" evidence="32">
    <location>
        <begin position="1130"/>
        <end position="1132"/>
    </location>
</feature>
<feature type="strand" evidence="33">
    <location>
        <begin position="1135"/>
        <end position="1140"/>
    </location>
</feature>
<feature type="helix" evidence="33">
    <location>
        <begin position="1142"/>
        <end position="1172"/>
    </location>
</feature>
<feature type="helix" evidence="33">
    <location>
        <begin position="1179"/>
        <end position="1183"/>
    </location>
</feature>
<feature type="helix" evidence="33">
    <location>
        <begin position="1190"/>
        <end position="1193"/>
    </location>
</feature>
<feature type="strand" evidence="31">
    <location>
        <begin position="1199"/>
        <end position="1201"/>
    </location>
</feature>
<feature type="helix" evidence="33">
    <location>
        <begin position="1203"/>
        <end position="1215"/>
    </location>
</feature>
<feature type="helix" evidence="33">
    <location>
        <begin position="1221"/>
        <end position="1231"/>
    </location>
</feature>
<feature type="turn" evidence="33">
    <location>
        <begin position="1233"/>
        <end position="1235"/>
    </location>
</feature>
<feature type="helix" evidence="33">
    <location>
        <begin position="1237"/>
        <end position="1239"/>
    </location>
</feature>
<feature type="helix" evidence="33">
    <location>
        <begin position="1242"/>
        <end position="1253"/>
    </location>
</feature>
<feature type="strand" evidence="33">
    <location>
        <begin position="1256"/>
        <end position="1258"/>
    </location>
</feature>
<feature type="helix" evidence="33">
    <location>
        <begin position="1260"/>
        <end position="1273"/>
    </location>
</feature>
<feature type="strand" evidence="33">
    <location>
        <begin position="1274"/>
        <end position="1276"/>
    </location>
</feature>
<feature type="strand" evidence="34">
    <location>
        <begin position="1277"/>
        <end position="1279"/>
    </location>
</feature>
<feature type="helix" evidence="33">
    <location>
        <begin position="1281"/>
        <end position="1293"/>
    </location>
</feature>
<feature type="strand" evidence="34">
    <location>
        <begin position="1296"/>
        <end position="1298"/>
    </location>
</feature>
<feature type="strand" evidence="33">
    <location>
        <begin position="1300"/>
        <end position="1306"/>
    </location>
</feature>
<feature type="turn" evidence="33">
    <location>
        <begin position="1307"/>
        <end position="1310"/>
    </location>
</feature>
<feature type="strand" evidence="33">
    <location>
        <begin position="1311"/>
        <end position="1317"/>
    </location>
</feature>
<feature type="strand" evidence="33">
    <location>
        <begin position="1319"/>
        <end position="1321"/>
    </location>
</feature>
<feature type="helix" evidence="33">
    <location>
        <begin position="1330"/>
        <end position="1342"/>
    </location>
</feature>
<feature type="strand" evidence="33">
    <location>
        <begin position="1343"/>
        <end position="1345"/>
    </location>
</feature>
<feature type="helix" evidence="33">
    <location>
        <begin position="1362"/>
        <end position="1371"/>
    </location>
</feature>
<evidence type="ECO:0000255" key="1">
    <source>
        <dbReference type="PROSITE-ProRule" id="PRU00810"/>
    </source>
</evidence>
<evidence type="ECO:0000256" key="2">
    <source>
        <dbReference type="SAM" id="MobiDB-lite"/>
    </source>
</evidence>
<evidence type="ECO:0000269" key="3">
    <source>
    </source>
</evidence>
<evidence type="ECO:0000269" key="4">
    <source>
    </source>
</evidence>
<evidence type="ECO:0000269" key="5">
    <source>
    </source>
</evidence>
<evidence type="ECO:0000269" key="6">
    <source>
    </source>
</evidence>
<evidence type="ECO:0000269" key="7">
    <source>
    </source>
</evidence>
<evidence type="ECO:0000269" key="8">
    <source>
    </source>
</evidence>
<evidence type="ECO:0000269" key="9">
    <source>
    </source>
</evidence>
<evidence type="ECO:0000269" key="10">
    <source>
    </source>
</evidence>
<evidence type="ECO:0000269" key="11">
    <source>
    </source>
</evidence>
<evidence type="ECO:0000269" key="12">
    <source>
    </source>
</evidence>
<evidence type="ECO:0000269" key="13">
    <source>
    </source>
</evidence>
<evidence type="ECO:0000269" key="14">
    <source>
    </source>
</evidence>
<evidence type="ECO:0000269" key="15">
    <source>
    </source>
</evidence>
<evidence type="ECO:0000269" key="16">
    <source>
    </source>
</evidence>
<evidence type="ECO:0000269" key="17">
    <source>
    </source>
</evidence>
<evidence type="ECO:0000269" key="18">
    <source>
    </source>
</evidence>
<evidence type="ECO:0000269" key="19">
    <source>
    </source>
</evidence>
<evidence type="ECO:0000269" key="20">
    <source>
    </source>
</evidence>
<evidence type="ECO:0000269" key="21">
    <source>
    </source>
</evidence>
<evidence type="ECO:0000269" key="22">
    <source>
    </source>
</evidence>
<evidence type="ECO:0000269" key="23">
    <source>
    </source>
</evidence>
<evidence type="ECO:0000269" key="24">
    <source>
    </source>
</evidence>
<evidence type="ECO:0000269" key="25">
    <source>
    </source>
</evidence>
<evidence type="ECO:0000305" key="26"/>
<evidence type="ECO:0007744" key="27">
    <source>
    </source>
</evidence>
<evidence type="ECO:0007744" key="28">
    <source>
    </source>
</evidence>
<evidence type="ECO:0007744" key="29">
    <source>
    </source>
</evidence>
<evidence type="ECO:0007829" key="30">
    <source>
        <dbReference type="PDB" id="6XAW"/>
    </source>
</evidence>
<evidence type="ECO:0007829" key="31">
    <source>
        <dbReference type="PDB" id="7YI0"/>
    </source>
</evidence>
<evidence type="ECO:0007829" key="32">
    <source>
        <dbReference type="PDB" id="8GA8"/>
    </source>
</evidence>
<evidence type="ECO:0007829" key="33">
    <source>
        <dbReference type="PDB" id="8HPO"/>
    </source>
</evidence>
<evidence type="ECO:0007829" key="34">
    <source>
        <dbReference type="PDB" id="8HXX"/>
    </source>
</evidence>
<evidence type="ECO:0007829" key="35">
    <source>
        <dbReference type="PDB" id="8KC7"/>
    </source>
</evidence>
<evidence type="ECO:0007829" key="36">
    <source>
        <dbReference type="PDB" id="8KD2"/>
    </source>
</evidence>
<evidence type="ECO:0007829" key="37">
    <source>
        <dbReference type="PDB" id="8KD7"/>
    </source>
</evidence>
<evidence type="ECO:0007829" key="38">
    <source>
        <dbReference type="PDB" id="8TOF"/>
    </source>
</evidence>
<comment type="function">
    <text evidence="3 5 6 8 10 11 12 13 14 15 16 18 19 20 21 22 24 25">Catalytic component of the RPD3 histone deacetylase complexes RPD3C(L) and RPD3C(S) responsible for the deacetylation of lysine residues on the N-terminal part of the core histones (H2A, H2B, H3 and H4). Histone deacetylation gives a tag for epigenetic repression and plays an important role in transcriptional regulation, cell cycle progression and developmental events. SIN3 also has a RPD3 independent function required for normal longevity.</text>
</comment>
<comment type="subunit">
    <text evidence="4 6 7 16 17 22 23">Component of the RPD3C(L) complex composed of at least ASH1, CTI6, DEP1, PHO23, RPD3, RXT2, RXT3, SAP30, SDS3, SIN3, UME1 and UME6. Component of the RPD3C(S) complex composed of at least EAF3, RCO1, RPD3, SIN3, and UME1. Interacts with ESS1 and STB1.</text>
</comment>
<comment type="interaction">
    <interactant intactId="EBI-17160">
        <id>P22579</id>
    </interactant>
    <interactant intactId="EBI-6281">
        <id>Q12432</id>
        <label>EAF3</label>
    </interactant>
    <organismsDiffer>false</organismsDiffer>
    <experiments>8</experiments>
</comment>
<comment type="interaction">
    <interactant intactId="EBI-17160">
        <id>P22579</id>
    </interactant>
    <interactant intactId="EBI-12555">
        <id>P21957</id>
        <label>OPI1</label>
    </interactant>
    <organismsDiffer>false</organismsDiffer>
    <experiments>6</experiments>
</comment>
<comment type="interaction">
    <interactant intactId="EBI-17160">
        <id>P22579</id>
    </interactant>
    <interactant intactId="EBI-15864">
        <id>P32561</id>
        <label>RPD3</label>
    </interactant>
    <organismsDiffer>false</organismsDiffer>
    <experiments>11</experiments>
</comment>
<comment type="interaction">
    <interactant intactId="EBI-17160">
        <id>P22579</id>
    </interactant>
    <interactant intactId="EBI-17160">
        <id>P22579</id>
        <label>SIN3</label>
    </interactant>
    <organismsDiffer>false</organismsDiffer>
    <experiments>2</experiments>
</comment>
<comment type="subcellular location">
    <subcellularLocation>
        <location>Nucleus</location>
    </subcellularLocation>
</comment>
<comment type="miscellaneous">
    <text evidence="9">Present with 1660 molecules/cell in log phase SD medium.</text>
</comment>